<organism>
    <name type="scientific">Shouchella clausii (strain KSM-K16)</name>
    <name type="common">Alkalihalobacillus clausii</name>
    <dbReference type="NCBI Taxonomy" id="66692"/>
    <lineage>
        <taxon>Bacteria</taxon>
        <taxon>Bacillati</taxon>
        <taxon>Bacillota</taxon>
        <taxon>Bacilli</taxon>
        <taxon>Bacillales</taxon>
        <taxon>Bacillaceae</taxon>
        <taxon>Shouchella</taxon>
    </lineage>
</organism>
<reference key="1">
    <citation type="submission" date="2003-10" db="EMBL/GenBank/DDBJ databases">
        <title>The complete genome sequence of the alkaliphilic Bacillus clausii KSM-K16.</title>
        <authorList>
            <person name="Takaki Y."/>
            <person name="Kageyama Y."/>
            <person name="Shimamura S."/>
            <person name="Suzuki H."/>
            <person name="Nishi S."/>
            <person name="Hatada Y."/>
            <person name="Kawai S."/>
            <person name="Ito S."/>
            <person name="Horikoshi K."/>
        </authorList>
    </citation>
    <scope>NUCLEOTIDE SEQUENCE [LARGE SCALE GENOMIC DNA]</scope>
    <source>
        <strain>KSM-K16</strain>
    </source>
</reference>
<evidence type="ECO:0000255" key="1">
    <source>
        <dbReference type="HAMAP-Rule" id="MF_01395"/>
    </source>
</evidence>
<evidence type="ECO:0000255" key="2">
    <source>
        <dbReference type="PROSITE-ProRule" id="PRU01136"/>
    </source>
</evidence>
<dbReference type="EC" id="2.1.3.15" evidence="1"/>
<dbReference type="EMBL" id="AP006627">
    <property type="protein sequence ID" value="BAD65256.1"/>
    <property type="molecule type" value="Genomic_DNA"/>
</dbReference>
<dbReference type="RefSeq" id="WP_011247564.1">
    <property type="nucleotide sequence ID" value="NC_006582.1"/>
</dbReference>
<dbReference type="SMR" id="Q5WEF4"/>
<dbReference type="STRING" id="66692.ABC2721"/>
<dbReference type="KEGG" id="bcl:ABC2721"/>
<dbReference type="eggNOG" id="COG0777">
    <property type="taxonomic scope" value="Bacteria"/>
</dbReference>
<dbReference type="HOGENOM" id="CLU_015486_1_1_9"/>
<dbReference type="OrthoDB" id="9772975at2"/>
<dbReference type="UniPathway" id="UPA00655">
    <property type="reaction ID" value="UER00711"/>
</dbReference>
<dbReference type="Proteomes" id="UP000001168">
    <property type="component" value="Chromosome"/>
</dbReference>
<dbReference type="GO" id="GO:0009317">
    <property type="term" value="C:acetyl-CoA carboxylase complex"/>
    <property type="evidence" value="ECO:0007669"/>
    <property type="project" value="InterPro"/>
</dbReference>
<dbReference type="GO" id="GO:0003989">
    <property type="term" value="F:acetyl-CoA carboxylase activity"/>
    <property type="evidence" value="ECO:0007669"/>
    <property type="project" value="InterPro"/>
</dbReference>
<dbReference type="GO" id="GO:0005524">
    <property type="term" value="F:ATP binding"/>
    <property type="evidence" value="ECO:0007669"/>
    <property type="project" value="UniProtKB-KW"/>
</dbReference>
<dbReference type="GO" id="GO:0016743">
    <property type="term" value="F:carboxyl- or carbamoyltransferase activity"/>
    <property type="evidence" value="ECO:0007669"/>
    <property type="project" value="UniProtKB-UniRule"/>
</dbReference>
<dbReference type="GO" id="GO:0008270">
    <property type="term" value="F:zinc ion binding"/>
    <property type="evidence" value="ECO:0007669"/>
    <property type="project" value="UniProtKB-UniRule"/>
</dbReference>
<dbReference type="GO" id="GO:0006633">
    <property type="term" value="P:fatty acid biosynthetic process"/>
    <property type="evidence" value="ECO:0007669"/>
    <property type="project" value="UniProtKB-KW"/>
</dbReference>
<dbReference type="GO" id="GO:2001295">
    <property type="term" value="P:malonyl-CoA biosynthetic process"/>
    <property type="evidence" value="ECO:0007669"/>
    <property type="project" value="UniProtKB-UniRule"/>
</dbReference>
<dbReference type="Gene3D" id="3.90.226.10">
    <property type="entry name" value="2-enoyl-CoA Hydratase, Chain A, domain 1"/>
    <property type="match status" value="1"/>
</dbReference>
<dbReference type="HAMAP" id="MF_01395">
    <property type="entry name" value="AcetylCoA_CT_beta"/>
    <property type="match status" value="1"/>
</dbReference>
<dbReference type="InterPro" id="IPR034733">
    <property type="entry name" value="AcCoA_carboxyl_beta"/>
</dbReference>
<dbReference type="InterPro" id="IPR000438">
    <property type="entry name" value="Acetyl_CoA_COase_Trfase_b_su"/>
</dbReference>
<dbReference type="InterPro" id="IPR029045">
    <property type="entry name" value="ClpP/crotonase-like_dom_sf"/>
</dbReference>
<dbReference type="InterPro" id="IPR011762">
    <property type="entry name" value="COA_CT_N"/>
</dbReference>
<dbReference type="InterPro" id="IPR041010">
    <property type="entry name" value="Znf-ACC"/>
</dbReference>
<dbReference type="NCBIfam" id="TIGR00515">
    <property type="entry name" value="accD"/>
    <property type="match status" value="1"/>
</dbReference>
<dbReference type="PANTHER" id="PTHR42995">
    <property type="entry name" value="ACETYL-COENZYME A CARBOXYLASE CARBOXYL TRANSFERASE SUBUNIT BETA, CHLOROPLASTIC"/>
    <property type="match status" value="1"/>
</dbReference>
<dbReference type="PANTHER" id="PTHR42995:SF5">
    <property type="entry name" value="ACETYL-COENZYME A CARBOXYLASE CARBOXYL TRANSFERASE SUBUNIT BETA, CHLOROPLASTIC"/>
    <property type="match status" value="1"/>
</dbReference>
<dbReference type="Pfam" id="PF01039">
    <property type="entry name" value="Carboxyl_trans"/>
    <property type="match status" value="1"/>
</dbReference>
<dbReference type="Pfam" id="PF17848">
    <property type="entry name" value="Zn_ribbon_ACC"/>
    <property type="match status" value="1"/>
</dbReference>
<dbReference type="PRINTS" id="PR01070">
    <property type="entry name" value="ACCCTRFRASEB"/>
</dbReference>
<dbReference type="SUPFAM" id="SSF52096">
    <property type="entry name" value="ClpP/crotonase"/>
    <property type="match status" value="1"/>
</dbReference>
<dbReference type="PROSITE" id="PS50980">
    <property type="entry name" value="COA_CT_NTER"/>
    <property type="match status" value="1"/>
</dbReference>
<gene>
    <name evidence="1" type="primary">accD</name>
    <name type="ordered locus">ABC2721</name>
</gene>
<feature type="chain" id="PRO_0000389682" description="Acetyl-coenzyme A carboxylase carboxyl transferase subunit beta">
    <location>
        <begin position="1"/>
        <end position="280"/>
    </location>
</feature>
<feature type="domain" description="CoA carboxyltransferase N-terminal" evidence="2">
    <location>
        <begin position="28"/>
        <end position="280"/>
    </location>
</feature>
<feature type="zinc finger region" description="C4-type" evidence="1">
    <location>
        <begin position="32"/>
        <end position="54"/>
    </location>
</feature>
<feature type="binding site" evidence="1">
    <location>
        <position position="32"/>
    </location>
    <ligand>
        <name>Zn(2+)</name>
        <dbReference type="ChEBI" id="CHEBI:29105"/>
    </ligand>
</feature>
<feature type="binding site" evidence="1">
    <location>
        <position position="35"/>
    </location>
    <ligand>
        <name>Zn(2+)</name>
        <dbReference type="ChEBI" id="CHEBI:29105"/>
    </ligand>
</feature>
<feature type="binding site" evidence="1">
    <location>
        <position position="51"/>
    </location>
    <ligand>
        <name>Zn(2+)</name>
        <dbReference type="ChEBI" id="CHEBI:29105"/>
    </ligand>
</feature>
<feature type="binding site" evidence="1">
    <location>
        <position position="54"/>
    </location>
    <ligand>
        <name>Zn(2+)</name>
        <dbReference type="ChEBI" id="CHEBI:29105"/>
    </ligand>
</feature>
<accession>Q5WEF4</accession>
<protein>
    <recommendedName>
        <fullName evidence="1">Acetyl-coenzyme A carboxylase carboxyl transferase subunit beta</fullName>
        <shortName evidence="1">ACCase subunit beta</shortName>
        <shortName evidence="1">Acetyl-CoA carboxylase carboxyltransferase subunit beta</shortName>
        <ecNumber evidence="1">2.1.3.15</ecNumber>
    </recommendedName>
</protein>
<sequence>MLKDMFSKKKRYATIPSERAKQEVPEGIMTKCPSCRTIMYTKDLKKNLSVCRTCGHHHRMSARERIDSIIDDGTFKEAFASVKGGNPLQFPGYEEKLESDRKKTGLNEAVVTGEGKINGYPVVIAVMDPNFRMASMGSAVGEKLTRAIELATETSVPLLIFAASGGARMQEGMLSLMQMAKTSAALERLNRAGGLYISVMTNPTTGGVSASFASLGDYNFAEPKALIGFAGRRIIEQTIRQELPEDFQTAEFLLEHGQLDRVIPRLEMKETLTKLLAMHQ</sequence>
<keyword id="KW-0067">ATP-binding</keyword>
<keyword id="KW-0963">Cytoplasm</keyword>
<keyword id="KW-0275">Fatty acid biosynthesis</keyword>
<keyword id="KW-0276">Fatty acid metabolism</keyword>
<keyword id="KW-0444">Lipid biosynthesis</keyword>
<keyword id="KW-0443">Lipid metabolism</keyword>
<keyword id="KW-0479">Metal-binding</keyword>
<keyword id="KW-0547">Nucleotide-binding</keyword>
<keyword id="KW-1185">Reference proteome</keyword>
<keyword id="KW-0808">Transferase</keyword>
<keyword id="KW-0862">Zinc</keyword>
<keyword id="KW-0863">Zinc-finger</keyword>
<comment type="function">
    <text evidence="1">Component of the acetyl coenzyme A carboxylase (ACC) complex. Biotin carboxylase (BC) catalyzes the carboxylation of biotin on its carrier protein (BCCP) and then the CO(2) group is transferred by the transcarboxylase to acetyl-CoA to form malonyl-CoA.</text>
</comment>
<comment type="catalytic activity">
    <reaction evidence="1">
        <text>N(6)-carboxybiotinyl-L-lysyl-[protein] + acetyl-CoA = N(6)-biotinyl-L-lysyl-[protein] + malonyl-CoA</text>
        <dbReference type="Rhea" id="RHEA:54728"/>
        <dbReference type="Rhea" id="RHEA-COMP:10505"/>
        <dbReference type="Rhea" id="RHEA-COMP:10506"/>
        <dbReference type="ChEBI" id="CHEBI:57288"/>
        <dbReference type="ChEBI" id="CHEBI:57384"/>
        <dbReference type="ChEBI" id="CHEBI:83144"/>
        <dbReference type="ChEBI" id="CHEBI:83145"/>
        <dbReference type="EC" id="2.1.3.15"/>
    </reaction>
</comment>
<comment type="cofactor">
    <cofactor evidence="1">
        <name>Zn(2+)</name>
        <dbReference type="ChEBI" id="CHEBI:29105"/>
    </cofactor>
    <text evidence="1">Binds 1 zinc ion per subunit.</text>
</comment>
<comment type="pathway">
    <text evidence="1">Lipid metabolism; malonyl-CoA biosynthesis; malonyl-CoA from acetyl-CoA: step 1/1.</text>
</comment>
<comment type="subunit">
    <text evidence="1">Acetyl-CoA carboxylase is a heterohexamer composed of biotin carboxyl carrier protein (AccB), biotin carboxylase (AccC) and two subunits each of ACCase subunit alpha (AccA) and ACCase subunit beta (AccD).</text>
</comment>
<comment type="subcellular location">
    <subcellularLocation>
        <location evidence="1">Cytoplasm</location>
    </subcellularLocation>
</comment>
<comment type="similarity">
    <text evidence="1">Belongs to the AccD/PCCB family.</text>
</comment>
<name>ACCD_SHOC1</name>
<proteinExistence type="inferred from homology"/>